<name>ADH7_MOUSE</name>
<accession>Q64437</accession>
<proteinExistence type="evidence at transcript level"/>
<evidence type="ECO:0000250" key="1"/>
<evidence type="ECO:0000250" key="2">
    <source>
        <dbReference type="UniProtKB" id="P40394"/>
    </source>
</evidence>
<evidence type="ECO:0000305" key="3"/>
<sequence>MGTAGKVIKCKAAVLWGVNQPFSIEEIEVAPPKAKEVRVKILATGICRTDDHIIKGSMVSKFPVIVGHEAVGVVESVGEGVTTVRPGDKVIPLFLPQCRECNACLNPEGNLCIRSDLTGRGVLADGTTRFTCKGKPVQHFMNTSTFTEYTVLDESSVAKVDGAAPPEKACLIGCGFSTGYGAAVKTAKVTPGSTCVVFGLGGVGLSVIMGCKAAGASRIIGIDINKDKFQKALAVGATECISPKDSTKPISEVLSDMTGNTIQYTFEVIGRLETMVDALSSCHMNYGTSVVVGAPPSAKMLTYDPMLLFTGRTWKGCVFGGWKSRDDVPKLVTEFLEKKFDLDQLITHTLPFNNINEGFELLYSGKSIRTVLTF</sequence>
<protein>
    <recommendedName>
        <fullName evidence="3">All-trans-retinol dehydrogenase [NAD(+)] ADH7</fullName>
        <ecNumber evidence="2">1.1.1.105</ecNumber>
    </recommendedName>
    <alternativeName>
        <fullName>ADH-C2</fullName>
    </alternativeName>
    <alternativeName>
        <fullName>Alcohol dehydrogenase 7</fullName>
    </alternativeName>
    <alternativeName>
        <fullName>Alcohol dehydrogenase class 4 mu/sigma chain</fullName>
        <ecNumber evidence="2">1.1.1.1</ecNumber>
    </alternativeName>
    <alternativeName>
        <fullName>Alcohol dehydrogenase class IV mu/sigma chain</fullName>
    </alternativeName>
    <alternativeName>
        <fullName>Gastric alcohol dehydrogenase</fullName>
    </alternativeName>
    <alternativeName>
        <fullName evidence="2">Omega-hydroxydecanoate dehydrogenase ADH7</fullName>
        <ecNumber evidence="2">1.1.1.66</ecNumber>
    </alternativeName>
    <alternativeName>
        <fullName>Retinol dehydrogenase</fullName>
    </alternativeName>
</protein>
<reference key="1">
    <citation type="journal article" date="1995" name="J. Biol. Chem.">
        <title>Cloning of the mouse class IV alcohol dehydrogenase (retinol dehydrogenase) cDNA and tissue-specific expression patterns of the murine ADH gene family.</title>
        <authorList>
            <person name="Zgombic-Knight M."/>
            <person name="Ang H.L."/>
            <person name="Foglio M.H."/>
            <person name="Duester G."/>
        </authorList>
    </citation>
    <scope>NUCLEOTIDE SEQUENCE [MRNA]</scope>
    <source>
        <strain>FVB/N</strain>
        <tissue>Gastric mucosa</tissue>
    </source>
</reference>
<reference key="2">
    <citation type="journal article" date="1997" name="Genomics">
        <title>Gene structure and promoter for Adh-3 encoding mouse class IV alcohol dehydrogenase (retinol dehydrogenase).</title>
        <authorList>
            <person name="Zgombic-Knight M."/>
            <person name="Deltour L."/>
            <person name="Haselbeck R.J."/>
            <person name="Foglio M.H."/>
            <person name="Duester G."/>
        </authorList>
    </citation>
    <scope>NUCLEOTIDE SEQUENCE [GENOMIC DNA]</scope>
    <source>
        <strain>129/SvJ</strain>
    </source>
</reference>
<reference key="3">
    <citation type="journal article" date="2009" name="PLoS Biol.">
        <title>Lineage-specific biology revealed by a finished genome assembly of the mouse.</title>
        <authorList>
            <person name="Church D.M."/>
            <person name="Goodstadt L."/>
            <person name="Hillier L.W."/>
            <person name="Zody M.C."/>
            <person name="Goldstein S."/>
            <person name="She X."/>
            <person name="Bult C.J."/>
            <person name="Agarwala R."/>
            <person name="Cherry J.L."/>
            <person name="DiCuccio M."/>
            <person name="Hlavina W."/>
            <person name="Kapustin Y."/>
            <person name="Meric P."/>
            <person name="Maglott D."/>
            <person name="Birtle Z."/>
            <person name="Marques A.C."/>
            <person name="Graves T."/>
            <person name="Zhou S."/>
            <person name="Teague B."/>
            <person name="Potamousis K."/>
            <person name="Churas C."/>
            <person name="Place M."/>
            <person name="Herschleb J."/>
            <person name="Runnheim R."/>
            <person name="Forrest D."/>
            <person name="Amos-Landgraf J."/>
            <person name="Schwartz D.C."/>
            <person name="Cheng Z."/>
            <person name="Lindblad-Toh K."/>
            <person name="Eichler E.E."/>
            <person name="Ponting C.P."/>
        </authorList>
    </citation>
    <scope>NUCLEOTIDE SEQUENCE [LARGE SCALE GENOMIC DNA]</scope>
    <source>
        <strain>C57BL/6J</strain>
    </source>
</reference>
<comment type="function">
    <text evidence="2">Catalyzes the NAD-dependent oxidation of all-trans-retinol, alcohol, aldehyde and omega-hydroxy fatty acids and their derivatives. Oxidizes preferentially all trans-retinol, all-trans-4-hydroxyretinol, 9-cis-retinol, 2-hexenol, and long chain omega-hydroxy fatty acids such as juniperic acid. In vitro can also catalyze the NADH-dependent reduction of all-trans-retinal and aldehydes and their derivatives. Reduces preferentially all trans-retinal, all-trans-4-oxoretinal and hexanal. Catalyzes in the oxidative direction with higher efficiency. Therefore may participate in retinoid metabolism, fatty acid omega-oxidation, and elimination of cytotoxic aldehydes produced by lipid peroxidation.</text>
</comment>
<comment type="catalytic activity">
    <reaction evidence="2">
        <text>a primary alcohol + NAD(+) = an aldehyde + NADH + H(+)</text>
        <dbReference type="Rhea" id="RHEA:10736"/>
        <dbReference type="ChEBI" id="CHEBI:15378"/>
        <dbReference type="ChEBI" id="CHEBI:15734"/>
        <dbReference type="ChEBI" id="CHEBI:17478"/>
        <dbReference type="ChEBI" id="CHEBI:57540"/>
        <dbReference type="ChEBI" id="CHEBI:57945"/>
        <dbReference type="EC" id="1.1.1.1"/>
    </reaction>
    <physiologicalReaction direction="left-to-right" evidence="2">
        <dbReference type="Rhea" id="RHEA:10737"/>
    </physiologicalReaction>
    <physiologicalReaction direction="right-to-left" evidence="2">
        <dbReference type="Rhea" id="RHEA:10738"/>
    </physiologicalReaction>
</comment>
<comment type="catalytic activity">
    <reaction evidence="2">
        <text>10-hydroxydecanoate + NAD(+) = 10-oxodecanoate + NADH + H(+)</text>
        <dbReference type="Rhea" id="RHEA:20880"/>
        <dbReference type="ChEBI" id="CHEBI:11305"/>
        <dbReference type="ChEBI" id="CHEBI:15378"/>
        <dbReference type="ChEBI" id="CHEBI:57540"/>
        <dbReference type="ChEBI" id="CHEBI:57945"/>
        <dbReference type="ChEBI" id="CHEBI:58022"/>
        <dbReference type="EC" id="1.1.1.66"/>
    </reaction>
    <physiologicalReaction direction="left-to-right" evidence="2">
        <dbReference type="Rhea" id="RHEA:20881"/>
    </physiologicalReaction>
</comment>
<comment type="catalytic activity">
    <reaction evidence="2">
        <text>all-trans-retinol + NAD(+) = all-trans-retinal + NADH + H(+)</text>
        <dbReference type="Rhea" id="RHEA:21284"/>
        <dbReference type="ChEBI" id="CHEBI:15378"/>
        <dbReference type="ChEBI" id="CHEBI:17336"/>
        <dbReference type="ChEBI" id="CHEBI:17898"/>
        <dbReference type="ChEBI" id="CHEBI:57540"/>
        <dbReference type="ChEBI" id="CHEBI:57945"/>
        <dbReference type="EC" id="1.1.1.105"/>
    </reaction>
    <physiologicalReaction direction="left-to-right" evidence="2">
        <dbReference type="Rhea" id="RHEA:21285"/>
    </physiologicalReaction>
</comment>
<comment type="catalytic activity">
    <reaction evidence="2">
        <text>9-cis-retinol + NAD(+) = 9-cis-retinal + NADH + H(+)</text>
        <dbReference type="Rhea" id="RHEA:42052"/>
        <dbReference type="ChEBI" id="CHEBI:15378"/>
        <dbReference type="ChEBI" id="CHEBI:57540"/>
        <dbReference type="ChEBI" id="CHEBI:57945"/>
        <dbReference type="ChEBI" id="CHEBI:78272"/>
        <dbReference type="ChEBI" id="CHEBI:78273"/>
    </reaction>
    <physiologicalReaction direction="left-to-right" evidence="2">
        <dbReference type="Rhea" id="RHEA:42053"/>
    </physiologicalReaction>
</comment>
<comment type="catalytic activity">
    <reaction evidence="2">
        <text>all-trans-3,4-didehydroretinol + NAD(+) = all-trans-3,4-didehydroretinal + NADH + H(+)</text>
        <dbReference type="Rhea" id="RHEA:55940"/>
        <dbReference type="ChEBI" id="CHEBI:15378"/>
        <dbReference type="ChEBI" id="CHEBI:28537"/>
        <dbReference type="ChEBI" id="CHEBI:57540"/>
        <dbReference type="ChEBI" id="CHEBI:57945"/>
        <dbReference type="ChEBI" id="CHEBI:132246"/>
    </reaction>
    <physiologicalReaction direction="left-to-right" evidence="2">
        <dbReference type="Rhea" id="RHEA:55941"/>
    </physiologicalReaction>
</comment>
<comment type="catalytic activity">
    <reaction evidence="2">
        <text>all-trans-4-hydroxyretinol + NAD(+) = all-trans-4-hydroxyretinal + NADH + H(+)</text>
        <dbReference type="Rhea" id="RHEA:55936"/>
        <dbReference type="ChEBI" id="CHEBI:15378"/>
        <dbReference type="ChEBI" id="CHEBI:57540"/>
        <dbReference type="ChEBI" id="CHEBI:57945"/>
        <dbReference type="ChEBI" id="CHEBI:132259"/>
        <dbReference type="ChEBI" id="CHEBI:139346"/>
    </reaction>
    <physiologicalReaction direction="left-to-right" evidence="2">
        <dbReference type="Rhea" id="RHEA:55937"/>
    </physiologicalReaction>
</comment>
<comment type="catalytic activity">
    <reaction evidence="2">
        <text>all-trans-4-oxoretinol + NAD(+) = all-trans-4-oxoretinal + NADH + H(+)</text>
        <dbReference type="Rhea" id="RHEA:60632"/>
        <dbReference type="ChEBI" id="CHEBI:15378"/>
        <dbReference type="ChEBI" id="CHEBI:44597"/>
        <dbReference type="ChEBI" id="CHEBI:57540"/>
        <dbReference type="ChEBI" id="CHEBI:57945"/>
        <dbReference type="ChEBI" id="CHEBI:139347"/>
    </reaction>
    <physiologicalReaction direction="right-to-left" evidence="2">
        <dbReference type="Rhea" id="RHEA:60634"/>
    </physiologicalReaction>
</comment>
<comment type="catalytic activity">
    <reaction evidence="2">
        <text>12-hydroxydodecanoate + NAD(+) = 12-oxododecanoate + NADH + H(+)</text>
        <dbReference type="Rhea" id="RHEA:60980"/>
        <dbReference type="ChEBI" id="CHEBI:15378"/>
        <dbReference type="ChEBI" id="CHEBI:36204"/>
        <dbReference type="ChEBI" id="CHEBI:57540"/>
        <dbReference type="ChEBI" id="CHEBI:57945"/>
        <dbReference type="ChEBI" id="CHEBI:144067"/>
    </reaction>
    <physiologicalReaction direction="left-to-right" evidence="2">
        <dbReference type="Rhea" id="RHEA:60981"/>
    </physiologicalReaction>
</comment>
<comment type="catalytic activity">
    <reaction evidence="2">
        <text>16-hydroxyhexadecanoate + NAD(+) = 16-oxohexadecanoate + NADH + H(+)</text>
        <dbReference type="Rhea" id="RHEA:60984"/>
        <dbReference type="ChEBI" id="CHEBI:15378"/>
        <dbReference type="ChEBI" id="CHEBI:55329"/>
        <dbReference type="ChEBI" id="CHEBI:57540"/>
        <dbReference type="ChEBI" id="CHEBI:57945"/>
        <dbReference type="ChEBI" id="CHEBI:144068"/>
    </reaction>
    <physiologicalReaction direction="left-to-right" evidence="2">
        <dbReference type="Rhea" id="RHEA:60985"/>
    </physiologicalReaction>
</comment>
<comment type="catalytic activity">
    <reaction evidence="2">
        <text>hexan-1-ol + NAD(+) = hexanal + NADH + H(+)</text>
        <dbReference type="Rhea" id="RHEA:60972"/>
        <dbReference type="ChEBI" id="CHEBI:15378"/>
        <dbReference type="ChEBI" id="CHEBI:57540"/>
        <dbReference type="ChEBI" id="CHEBI:57945"/>
        <dbReference type="ChEBI" id="CHEBI:87393"/>
        <dbReference type="ChEBI" id="CHEBI:88528"/>
    </reaction>
    <physiologicalReaction direction="left-to-right" evidence="2">
        <dbReference type="Rhea" id="RHEA:60973"/>
    </physiologicalReaction>
    <physiologicalReaction direction="right-to-left" evidence="2">
        <dbReference type="Rhea" id="RHEA:60974"/>
    </physiologicalReaction>
</comment>
<comment type="catalytic activity">
    <reaction evidence="2">
        <text>(E)-hex-2-en-1-ol + NAD(+) = (E)-hex-2-enal + NADH + H(+)</text>
        <dbReference type="Rhea" id="RHEA:60988"/>
        <dbReference type="ChEBI" id="CHEBI:15378"/>
        <dbReference type="ChEBI" id="CHEBI:28913"/>
        <dbReference type="ChEBI" id="CHEBI:57540"/>
        <dbReference type="ChEBI" id="CHEBI:57945"/>
        <dbReference type="ChEBI" id="CHEBI:141205"/>
    </reaction>
    <physiologicalReaction direction="left-to-right" evidence="2">
        <dbReference type="Rhea" id="RHEA:60989"/>
    </physiologicalReaction>
    <physiologicalReaction direction="right-to-left" evidence="2">
        <dbReference type="Rhea" id="RHEA:60990"/>
    </physiologicalReaction>
</comment>
<comment type="catalytic activity">
    <reaction evidence="2">
        <text>(E)-4-hydroxynon-2-en-1-ol + NAD(+) = (E)-4-hydroxynon-2-enal + NADH + H(+)</text>
        <dbReference type="Rhea" id="RHEA:60976"/>
        <dbReference type="ChEBI" id="CHEBI:15378"/>
        <dbReference type="ChEBI" id="CHEBI:57540"/>
        <dbReference type="ChEBI" id="CHEBI:57945"/>
        <dbReference type="ChEBI" id="CHEBI:58968"/>
        <dbReference type="ChEBI" id="CHEBI:142617"/>
    </reaction>
    <physiologicalReaction direction="right-to-left" evidence="2">
        <dbReference type="Rhea" id="RHEA:60978"/>
    </physiologicalReaction>
</comment>
<comment type="cofactor">
    <cofactor evidence="1">
        <name>Zn(2+)</name>
        <dbReference type="ChEBI" id="CHEBI:29105"/>
    </cofactor>
    <text evidence="1">Binds 2 Zn(2+) ions per subunit.</text>
</comment>
<comment type="activity regulation">
    <text evidence="2">Retinol oxidation is inhibited by the detergent Tween 80. Ethanol inhibits both all-trans-retinol and 9-cis-retinol oxidation. 13-cis-retinol is an effective competitive inhibitor of the 9-cis-retinol oxidation. All-trans-retinoic acid is a powerful inhibitor of all-trans-retinol oxidation. 13-cis-retinoic acid is a powerful inhibitor of all-trans-retinol oxidation. Cimetidine competitively inhibited ethanol oxidation.</text>
</comment>
<comment type="subunit">
    <text>Homodimer.</text>
</comment>
<comment type="subcellular location">
    <subcellularLocation>
        <location>Cytoplasm</location>
    </subcellularLocation>
</comment>
<comment type="tissue specificity">
    <text>High expression in the stomach mucosa. Lower expression in eye, thymus, skin and ovary. Very low expression in small intestine, liver and uterus.</text>
</comment>
<comment type="similarity">
    <text evidence="3">Belongs to the zinc-containing alcohol dehydrogenase family. Class-IV subfamily.</text>
</comment>
<feature type="chain" id="PRO_0000160692" description="All-trans-retinol dehydrogenase [NAD(+)] ADH7">
    <location>
        <begin position="1"/>
        <end position="374"/>
    </location>
</feature>
<feature type="binding site" evidence="1">
    <location>
        <position position="47"/>
    </location>
    <ligand>
        <name>Zn(2+)</name>
        <dbReference type="ChEBI" id="CHEBI:29105"/>
        <label>1</label>
        <note>catalytic</note>
    </ligand>
</feature>
<feature type="binding site" evidence="1">
    <location>
        <position position="68"/>
    </location>
    <ligand>
        <name>Zn(2+)</name>
        <dbReference type="ChEBI" id="CHEBI:29105"/>
        <label>1</label>
        <note>catalytic</note>
    </ligand>
</feature>
<feature type="binding site" evidence="1">
    <location>
        <position position="98"/>
    </location>
    <ligand>
        <name>Zn(2+)</name>
        <dbReference type="ChEBI" id="CHEBI:29105"/>
        <label>2</label>
    </ligand>
</feature>
<feature type="binding site" evidence="1">
    <location>
        <position position="101"/>
    </location>
    <ligand>
        <name>Zn(2+)</name>
        <dbReference type="ChEBI" id="CHEBI:29105"/>
        <label>2</label>
    </ligand>
</feature>
<feature type="binding site" evidence="1">
    <location>
        <position position="104"/>
    </location>
    <ligand>
        <name>Zn(2+)</name>
        <dbReference type="ChEBI" id="CHEBI:29105"/>
        <label>2</label>
    </ligand>
</feature>
<feature type="binding site" evidence="1">
    <location>
        <position position="112"/>
    </location>
    <ligand>
        <name>Zn(2+)</name>
        <dbReference type="ChEBI" id="CHEBI:29105"/>
        <label>2</label>
    </ligand>
</feature>
<feature type="binding site" evidence="1">
    <location>
        <position position="174"/>
    </location>
    <ligand>
        <name>Zn(2+)</name>
        <dbReference type="ChEBI" id="CHEBI:29105"/>
        <label>1</label>
        <note>catalytic</note>
    </ligand>
</feature>
<feature type="binding site" evidence="1">
    <location>
        <begin position="199"/>
        <end position="204"/>
    </location>
    <ligand>
        <name>NAD(+)</name>
        <dbReference type="ChEBI" id="CHEBI:57540"/>
    </ligand>
</feature>
<feature type="binding site" evidence="1">
    <location>
        <position position="223"/>
    </location>
    <ligand>
        <name>NAD(+)</name>
        <dbReference type="ChEBI" id="CHEBI:57540"/>
    </ligand>
</feature>
<feature type="binding site" evidence="1">
    <location>
        <position position="228"/>
    </location>
    <ligand>
        <name>NAD(+)</name>
        <dbReference type="ChEBI" id="CHEBI:57540"/>
    </ligand>
</feature>
<feature type="binding site" evidence="1">
    <location>
        <begin position="292"/>
        <end position="294"/>
    </location>
    <ligand>
        <name>NAD(+)</name>
        <dbReference type="ChEBI" id="CHEBI:57540"/>
    </ligand>
</feature>
<feature type="binding site" evidence="1">
    <location>
        <position position="369"/>
    </location>
    <ligand>
        <name>NAD(+)</name>
        <dbReference type="ChEBI" id="CHEBI:57540"/>
    </ligand>
</feature>
<feature type="sequence conflict" description="In Ref. 1; AAA76735 and 2; AAC53124." evidence="3" ref="1 2">
    <original>R</original>
    <variation>C</variation>
    <location>
        <position position="120"/>
    </location>
</feature>
<feature type="sequence conflict" description="In Ref. 1; AAA76735 and 2; AAC53124." evidence="3" ref="1 2">
    <original>I</original>
    <variation>V</variation>
    <location>
        <position position="262"/>
    </location>
</feature>
<organism>
    <name type="scientific">Mus musculus</name>
    <name type="common">Mouse</name>
    <dbReference type="NCBI Taxonomy" id="10090"/>
    <lineage>
        <taxon>Eukaryota</taxon>
        <taxon>Metazoa</taxon>
        <taxon>Chordata</taxon>
        <taxon>Craniata</taxon>
        <taxon>Vertebrata</taxon>
        <taxon>Euteleostomi</taxon>
        <taxon>Mammalia</taxon>
        <taxon>Eutheria</taxon>
        <taxon>Euarchontoglires</taxon>
        <taxon>Glires</taxon>
        <taxon>Rodentia</taxon>
        <taxon>Myomorpha</taxon>
        <taxon>Muroidea</taxon>
        <taxon>Muridae</taxon>
        <taxon>Murinae</taxon>
        <taxon>Mus</taxon>
        <taxon>Mus</taxon>
    </lineage>
</organism>
<gene>
    <name type="primary">Adh7</name>
    <name type="synonym">Adh-3</name>
    <name type="synonym">Adh3</name>
</gene>
<keyword id="KW-0963">Cytoplasm</keyword>
<keyword id="KW-0443">Lipid metabolism</keyword>
<keyword id="KW-0479">Metal-binding</keyword>
<keyword id="KW-0520">NAD</keyword>
<keyword id="KW-0560">Oxidoreductase</keyword>
<keyword id="KW-1185">Reference proteome</keyword>
<keyword id="KW-0862">Zinc</keyword>
<dbReference type="EC" id="1.1.1.105" evidence="2"/>
<dbReference type="EC" id="1.1.1.1" evidence="2"/>
<dbReference type="EC" id="1.1.1.66" evidence="2"/>
<dbReference type="EMBL" id="U20257">
    <property type="protein sequence ID" value="AAA76735.1"/>
    <property type="molecule type" value="mRNA"/>
</dbReference>
<dbReference type="EMBL" id="U76734">
    <property type="protein sequence ID" value="AAC53124.1"/>
    <property type="molecule type" value="Genomic_DNA"/>
</dbReference>
<dbReference type="EMBL" id="U76728">
    <property type="protein sequence ID" value="AAC53124.1"/>
    <property type="status" value="JOINED"/>
    <property type="molecule type" value="Genomic_DNA"/>
</dbReference>
<dbReference type="EMBL" id="U76729">
    <property type="protein sequence ID" value="AAC53124.1"/>
    <property type="status" value="JOINED"/>
    <property type="molecule type" value="Genomic_DNA"/>
</dbReference>
<dbReference type="EMBL" id="U76730">
    <property type="protein sequence ID" value="AAC53124.1"/>
    <property type="status" value="JOINED"/>
    <property type="molecule type" value="Genomic_DNA"/>
</dbReference>
<dbReference type="EMBL" id="U76727">
    <property type="protein sequence ID" value="AAC53124.1"/>
    <property type="status" value="JOINED"/>
    <property type="molecule type" value="Genomic_DNA"/>
</dbReference>
<dbReference type="EMBL" id="U76731">
    <property type="protein sequence ID" value="AAC53124.1"/>
    <property type="status" value="JOINED"/>
    <property type="molecule type" value="Genomic_DNA"/>
</dbReference>
<dbReference type="EMBL" id="U76733">
    <property type="protein sequence ID" value="AAC53124.1"/>
    <property type="status" value="JOINED"/>
    <property type="molecule type" value="Genomic_DNA"/>
</dbReference>
<dbReference type="EMBL" id="U76732">
    <property type="protein sequence ID" value="AAC53124.1"/>
    <property type="status" value="JOINED"/>
    <property type="molecule type" value="Genomic_DNA"/>
</dbReference>
<dbReference type="EMBL" id="AC079682">
    <property type="status" value="NOT_ANNOTATED_CDS"/>
    <property type="molecule type" value="Genomic_DNA"/>
</dbReference>
<dbReference type="CCDS" id="CCDS38651.1"/>
<dbReference type="PIR" id="A56436">
    <property type="entry name" value="A56436"/>
</dbReference>
<dbReference type="RefSeq" id="NP_033756.2">
    <property type="nucleotide sequence ID" value="NM_009626.4"/>
</dbReference>
<dbReference type="RefSeq" id="XP_006500982.1">
    <property type="nucleotide sequence ID" value="XM_006500919.4"/>
</dbReference>
<dbReference type="SMR" id="Q64437"/>
<dbReference type="FunCoup" id="Q64437">
    <property type="interactions" value="281"/>
</dbReference>
<dbReference type="STRING" id="10090.ENSMUSP00000087633"/>
<dbReference type="GlyGen" id="Q64437">
    <property type="glycosylation" value="2 sites, 1 O-linked glycan (1 site)"/>
</dbReference>
<dbReference type="iPTMnet" id="Q64437"/>
<dbReference type="PhosphoSitePlus" id="Q64437"/>
<dbReference type="SwissPalm" id="Q64437"/>
<dbReference type="jPOST" id="Q64437"/>
<dbReference type="PaxDb" id="10090-ENSMUSP00000087633"/>
<dbReference type="PeptideAtlas" id="Q64437"/>
<dbReference type="ProteomicsDB" id="296183"/>
<dbReference type="Pumba" id="Q64437"/>
<dbReference type="Antibodypedia" id="25891">
    <property type="antibodies" value="363 antibodies from 32 providers"/>
</dbReference>
<dbReference type="DNASU" id="11529"/>
<dbReference type="Ensembl" id="ENSMUST00000090171.7">
    <property type="protein sequence ID" value="ENSMUSP00000087633.6"/>
    <property type="gene ID" value="ENSMUSG00000055301.9"/>
</dbReference>
<dbReference type="GeneID" id="11529"/>
<dbReference type="KEGG" id="mmu:11529"/>
<dbReference type="UCSC" id="uc008rnd.2">
    <property type="organism name" value="mouse"/>
</dbReference>
<dbReference type="AGR" id="MGI:87926"/>
<dbReference type="CTD" id="131"/>
<dbReference type="MGI" id="MGI:87926">
    <property type="gene designation" value="Adh7"/>
</dbReference>
<dbReference type="VEuPathDB" id="HostDB:ENSMUSG00000055301"/>
<dbReference type="eggNOG" id="KOG0022">
    <property type="taxonomic scope" value="Eukaryota"/>
</dbReference>
<dbReference type="GeneTree" id="ENSGT00940000162708"/>
<dbReference type="HOGENOM" id="CLU_026673_14_0_1"/>
<dbReference type="InParanoid" id="Q64437"/>
<dbReference type="OMA" id="MVISFHT"/>
<dbReference type="OrthoDB" id="417550at2759"/>
<dbReference type="PhylomeDB" id="Q64437"/>
<dbReference type="TreeFam" id="TF300429"/>
<dbReference type="Reactome" id="R-MMU-71384">
    <property type="pathway name" value="Ethanol oxidation"/>
</dbReference>
<dbReference type="BioGRID-ORCS" id="11529">
    <property type="hits" value="2 hits in 78 CRISPR screens"/>
</dbReference>
<dbReference type="ChiTaRS" id="Adh7">
    <property type="organism name" value="mouse"/>
</dbReference>
<dbReference type="PRO" id="PR:Q64437"/>
<dbReference type="Proteomes" id="UP000000589">
    <property type="component" value="Chromosome 3"/>
</dbReference>
<dbReference type="RNAct" id="Q64437">
    <property type="molecule type" value="protein"/>
</dbReference>
<dbReference type="Bgee" id="ENSMUSG00000055301">
    <property type="expression patterns" value="Expressed in esophagus and 103 other cell types or tissues"/>
</dbReference>
<dbReference type="ExpressionAtlas" id="Q64437">
    <property type="expression patterns" value="baseline and differential"/>
</dbReference>
<dbReference type="GO" id="GO:0005829">
    <property type="term" value="C:cytosol"/>
    <property type="evidence" value="ECO:0007669"/>
    <property type="project" value="Ensembl"/>
</dbReference>
<dbReference type="GO" id="GO:0005886">
    <property type="term" value="C:plasma membrane"/>
    <property type="evidence" value="ECO:0007669"/>
    <property type="project" value="Ensembl"/>
</dbReference>
<dbReference type="GO" id="GO:0004022">
    <property type="term" value="F:alcohol dehydrogenase (NAD+) activity"/>
    <property type="evidence" value="ECO:0000314"/>
    <property type="project" value="MGI"/>
</dbReference>
<dbReference type="GO" id="GO:0004745">
    <property type="term" value="F:all-trans-retinol dehydrogenase (NAD+) activity"/>
    <property type="evidence" value="ECO:0000314"/>
    <property type="project" value="MGI"/>
</dbReference>
<dbReference type="GO" id="GO:0050153">
    <property type="term" value="F:omega-hydroxydecanoate dehydrogenase activity"/>
    <property type="evidence" value="ECO:0007669"/>
    <property type="project" value="UniProtKB-EC"/>
</dbReference>
<dbReference type="GO" id="GO:0016491">
    <property type="term" value="F:oxidoreductase activity"/>
    <property type="evidence" value="ECO:0000304"/>
    <property type="project" value="MGI"/>
</dbReference>
<dbReference type="GO" id="GO:0008270">
    <property type="term" value="F:zinc ion binding"/>
    <property type="evidence" value="ECO:0007669"/>
    <property type="project" value="InterPro"/>
</dbReference>
<dbReference type="GO" id="GO:0006068">
    <property type="term" value="P:ethanol catabolic process"/>
    <property type="evidence" value="ECO:0000315"/>
    <property type="project" value="MGI"/>
</dbReference>
<dbReference type="GO" id="GO:0042573">
    <property type="term" value="P:retinoic acid metabolic process"/>
    <property type="evidence" value="ECO:0000315"/>
    <property type="project" value="MGI"/>
</dbReference>
<dbReference type="GO" id="GO:0001523">
    <property type="term" value="P:retinoid metabolic process"/>
    <property type="evidence" value="ECO:0000250"/>
    <property type="project" value="UniProtKB"/>
</dbReference>
<dbReference type="GO" id="GO:0042572">
    <property type="term" value="P:retinol metabolic process"/>
    <property type="evidence" value="ECO:0000315"/>
    <property type="project" value="MGI"/>
</dbReference>
<dbReference type="CDD" id="cd08299">
    <property type="entry name" value="alcohol_DH_class_I_II_IV"/>
    <property type="match status" value="1"/>
</dbReference>
<dbReference type="FunFam" id="3.40.50.720:FF:001857">
    <property type="entry name" value="Alcohol dehydrogenase class 4 mu/sigma chain"/>
    <property type="match status" value="1"/>
</dbReference>
<dbReference type="FunFam" id="3.90.180.10:FF:000001">
    <property type="entry name" value="S-(hydroxymethyl)glutathione dehydrogenase"/>
    <property type="match status" value="1"/>
</dbReference>
<dbReference type="Gene3D" id="3.90.180.10">
    <property type="entry name" value="Medium-chain alcohol dehydrogenases, catalytic domain"/>
    <property type="match status" value="1"/>
</dbReference>
<dbReference type="Gene3D" id="3.40.50.720">
    <property type="entry name" value="NAD(P)-binding Rossmann-like Domain"/>
    <property type="match status" value="1"/>
</dbReference>
<dbReference type="InterPro" id="IPR013149">
    <property type="entry name" value="ADH-like_C"/>
</dbReference>
<dbReference type="InterPro" id="IPR013154">
    <property type="entry name" value="ADH-like_N"/>
</dbReference>
<dbReference type="InterPro" id="IPR002328">
    <property type="entry name" value="ADH_Zn_CS"/>
</dbReference>
<dbReference type="InterPro" id="IPR011032">
    <property type="entry name" value="GroES-like_sf"/>
</dbReference>
<dbReference type="InterPro" id="IPR036291">
    <property type="entry name" value="NAD(P)-bd_dom_sf"/>
</dbReference>
<dbReference type="InterPro" id="IPR020843">
    <property type="entry name" value="PKS_ER"/>
</dbReference>
<dbReference type="PANTHER" id="PTHR43880">
    <property type="entry name" value="ALCOHOL DEHYDROGENASE"/>
    <property type="match status" value="1"/>
</dbReference>
<dbReference type="PANTHER" id="PTHR43880:SF2">
    <property type="entry name" value="ALL-TRANS-RETINOL DEHYDROGENASE [NAD(+)] ADH7"/>
    <property type="match status" value="1"/>
</dbReference>
<dbReference type="Pfam" id="PF08240">
    <property type="entry name" value="ADH_N"/>
    <property type="match status" value="1"/>
</dbReference>
<dbReference type="Pfam" id="PF00107">
    <property type="entry name" value="ADH_zinc_N"/>
    <property type="match status" value="1"/>
</dbReference>
<dbReference type="SMART" id="SM00829">
    <property type="entry name" value="PKS_ER"/>
    <property type="match status" value="1"/>
</dbReference>
<dbReference type="SUPFAM" id="SSF50129">
    <property type="entry name" value="GroES-like"/>
    <property type="match status" value="2"/>
</dbReference>
<dbReference type="SUPFAM" id="SSF51735">
    <property type="entry name" value="NAD(P)-binding Rossmann-fold domains"/>
    <property type="match status" value="1"/>
</dbReference>
<dbReference type="PROSITE" id="PS00059">
    <property type="entry name" value="ADH_ZINC"/>
    <property type="match status" value="1"/>
</dbReference>